<feature type="chain" id="PRO_0000356379" description="Large ribosomal subunit protein bL33A">
    <location>
        <begin position="1"/>
        <end position="49"/>
    </location>
</feature>
<feature type="region of interest" description="Disordered" evidence="2">
    <location>
        <begin position="20"/>
        <end position="49"/>
    </location>
</feature>
<feature type="compositionally biased region" description="Basic and acidic residues" evidence="2">
    <location>
        <begin position="25"/>
        <end position="49"/>
    </location>
</feature>
<name>RL331_BACVZ</name>
<accession>A7Z6Q6</accession>
<reference key="1">
    <citation type="journal article" date="2007" name="Nat. Biotechnol.">
        <title>Comparative analysis of the complete genome sequence of the plant growth-promoting bacterium Bacillus amyloliquefaciens FZB42.</title>
        <authorList>
            <person name="Chen X.H."/>
            <person name="Koumoutsi A."/>
            <person name="Scholz R."/>
            <person name="Eisenreich A."/>
            <person name="Schneider K."/>
            <person name="Heinemeyer I."/>
            <person name="Morgenstern B."/>
            <person name="Voss B."/>
            <person name="Hess W.R."/>
            <person name="Reva O."/>
            <person name="Junge H."/>
            <person name="Voigt B."/>
            <person name="Jungblut P.R."/>
            <person name="Vater J."/>
            <person name="Suessmuth R."/>
            <person name="Liesegang H."/>
            <person name="Strittmatter A."/>
            <person name="Gottschalk G."/>
            <person name="Borriss R."/>
        </authorList>
    </citation>
    <scope>NUCLEOTIDE SEQUENCE [LARGE SCALE GENOMIC DNA]</scope>
    <source>
        <strain>DSM 23117 / BGSC 10A6 / LMG 26770 / FZB42</strain>
    </source>
</reference>
<dbReference type="EMBL" id="CP000560">
    <property type="protein sequence ID" value="ABS74682.1"/>
    <property type="molecule type" value="Genomic_DNA"/>
</dbReference>
<dbReference type="SMR" id="A7Z6Q6"/>
<dbReference type="GeneID" id="93081460"/>
<dbReference type="KEGG" id="bay:RBAM_023220"/>
<dbReference type="HOGENOM" id="CLU_190949_0_2_9"/>
<dbReference type="Proteomes" id="UP000001120">
    <property type="component" value="Chromosome"/>
</dbReference>
<dbReference type="GO" id="GO:0005737">
    <property type="term" value="C:cytoplasm"/>
    <property type="evidence" value="ECO:0007669"/>
    <property type="project" value="UniProtKB-ARBA"/>
</dbReference>
<dbReference type="GO" id="GO:1990904">
    <property type="term" value="C:ribonucleoprotein complex"/>
    <property type="evidence" value="ECO:0007669"/>
    <property type="project" value="UniProtKB-KW"/>
</dbReference>
<dbReference type="GO" id="GO:0005840">
    <property type="term" value="C:ribosome"/>
    <property type="evidence" value="ECO:0007669"/>
    <property type="project" value="UniProtKB-KW"/>
</dbReference>
<dbReference type="GO" id="GO:0003735">
    <property type="term" value="F:structural constituent of ribosome"/>
    <property type="evidence" value="ECO:0007669"/>
    <property type="project" value="InterPro"/>
</dbReference>
<dbReference type="GO" id="GO:0006412">
    <property type="term" value="P:translation"/>
    <property type="evidence" value="ECO:0007669"/>
    <property type="project" value="UniProtKB-UniRule"/>
</dbReference>
<dbReference type="Gene3D" id="2.20.28.120">
    <property type="entry name" value="Ribosomal protein L33"/>
    <property type="match status" value="1"/>
</dbReference>
<dbReference type="HAMAP" id="MF_00294">
    <property type="entry name" value="Ribosomal_bL33"/>
    <property type="match status" value="1"/>
</dbReference>
<dbReference type="InterPro" id="IPR001705">
    <property type="entry name" value="Ribosomal_bL33"/>
</dbReference>
<dbReference type="InterPro" id="IPR018264">
    <property type="entry name" value="Ribosomal_bL33_CS"/>
</dbReference>
<dbReference type="InterPro" id="IPR038584">
    <property type="entry name" value="Ribosomal_bL33_sf"/>
</dbReference>
<dbReference type="InterPro" id="IPR011332">
    <property type="entry name" value="Ribosomal_zn-bd"/>
</dbReference>
<dbReference type="NCBIfam" id="NF001764">
    <property type="entry name" value="PRK00504.1"/>
    <property type="match status" value="1"/>
</dbReference>
<dbReference type="NCBIfam" id="NF001860">
    <property type="entry name" value="PRK00595.1"/>
    <property type="match status" value="1"/>
</dbReference>
<dbReference type="NCBIfam" id="TIGR01023">
    <property type="entry name" value="rpmG_bact"/>
    <property type="match status" value="1"/>
</dbReference>
<dbReference type="PANTHER" id="PTHR43168">
    <property type="entry name" value="50S RIBOSOMAL PROTEIN L33, CHLOROPLASTIC"/>
    <property type="match status" value="1"/>
</dbReference>
<dbReference type="PANTHER" id="PTHR43168:SF2">
    <property type="entry name" value="LARGE RIBOSOMAL SUBUNIT PROTEIN BL33C"/>
    <property type="match status" value="1"/>
</dbReference>
<dbReference type="Pfam" id="PF00471">
    <property type="entry name" value="Ribosomal_L33"/>
    <property type="match status" value="1"/>
</dbReference>
<dbReference type="SUPFAM" id="SSF57829">
    <property type="entry name" value="Zn-binding ribosomal proteins"/>
    <property type="match status" value="1"/>
</dbReference>
<dbReference type="PROSITE" id="PS00582">
    <property type="entry name" value="RIBOSOMAL_L33"/>
    <property type="match status" value="1"/>
</dbReference>
<sequence length="49" mass="5901">MRVNITLACTECGERNYISKKNKRNNPDRVEFKKYCPRDKKSTLHRETK</sequence>
<organism>
    <name type="scientific">Bacillus velezensis (strain DSM 23117 / BGSC 10A6 / LMG 26770 / FZB42)</name>
    <name type="common">Bacillus amyloliquefaciens subsp. plantarum</name>
    <dbReference type="NCBI Taxonomy" id="326423"/>
    <lineage>
        <taxon>Bacteria</taxon>
        <taxon>Bacillati</taxon>
        <taxon>Bacillota</taxon>
        <taxon>Bacilli</taxon>
        <taxon>Bacillales</taxon>
        <taxon>Bacillaceae</taxon>
        <taxon>Bacillus</taxon>
        <taxon>Bacillus amyloliquefaciens group</taxon>
    </lineage>
</organism>
<evidence type="ECO:0000255" key="1">
    <source>
        <dbReference type="HAMAP-Rule" id="MF_00294"/>
    </source>
</evidence>
<evidence type="ECO:0000256" key="2">
    <source>
        <dbReference type="SAM" id="MobiDB-lite"/>
    </source>
</evidence>
<keyword id="KW-0687">Ribonucleoprotein</keyword>
<keyword id="KW-0689">Ribosomal protein</keyword>
<comment type="similarity">
    <text evidence="1">Belongs to the bacterial ribosomal protein bL33 family.</text>
</comment>
<protein>
    <recommendedName>
        <fullName evidence="1">Large ribosomal subunit protein bL33A</fullName>
    </recommendedName>
    <alternativeName>
        <fullName evidence="1">50S ribosomal protein L33 1</fullName>
    </alternativeName>
</protein>
<proteinExistence type="inferred from homology"/>
<gene>
    <name evidence="1" type="primary">rpmG1</name>
    <name type="synonym">rpmGA</name>
    <name type="ordered locus">RBAM_023220</name>
</gene>